<feature type="chain" id="PRO_1000200118" description="Probable transcriptional regulatory protein Tgr7_2237">
    <location>
        <begin position="1"/>
        <end position="249"/>
    </location>
</feature>
<organism>
    <name type="scientific">Thioalkalivibrio sulfidiphilus (strain HL-EbGR7)</name>
    <dbReference type="NCBI Taxonomy" id="396588"/>
    <lineage>
        <taxon>Bacteria</taxon>
        <taxon>Pseudomonadati</taxon>
        <taxon>Pseudomonadota</taxon>
        <taxon>Gammaproteobacteria</taxon>
        <taxon>Chromatiales</taxon>
        <taxon>Ectothiorhodospiraceae</taxon>
        <taxon>Thioalkalivibrio</taxon>
    </lineage>
</organism>
<accession>B8GUJ7</accession>
<gene>
    <name type="ordered locus">Tgr7_2237</name>
</gene>
<reference key="1">
    <citation type="journal article" date="2011" name="Stand. Genomic Sci.">
        <title>Complete genome sequence of 'Thioalkalivibrio sulfidophilus' HL-EbGr7.</title>
        <authorList>
            <person name="Muyzer G."/>
            <person name="Sorokin D.Y."/>
            <person name="Mavromatis K."/>
            <person name="Lapidus A."/>
            <person name="Clum A."/>
            <person name="Ivanova N."/>
            <person name="Pati A."/>
            <person name="d'Haeseleer P."/>
            <person name="Woyke T."/>
            <person name="Kyrpides N.C."/>
        </authorList>
    </citation>
    <scope>NUCLEOTIDE SEQUENCE [LARGE SCALE GENOMIC DNA]</scope>
    <source>
        <strain>HL-EbGR7</strain>
    </source>
</reference>
<comment type="subcellular location">
    <subcellularLocation>
        <location evidence="1">Cytoplasm</location>
    </subcellularLocation>
</comment>
<comment type="similarity">
    <text evidence="1">Belongs to the TACO1 family.</text>
</comment>
<proteinExistence type="inferred from homology"/>
<keyword id="KW-0963">Cytoplasm</keyword>
<keyword id="KW-0238">DNA-binding</keyword>
<keyword id="KW-1185">Reference proteome</keyword>
<keyword id="KW-0804">Transcription</keyword>
<keyword id="KW-0805">Transcription regulation</keyword>
<evidence type="ECO:0000255" key="1">
    <source>
        <dbReference type="HAMAP-Rule" id="MF_00693"/>
    </source>
</evidence>
<protein>
    <recommendedName>
        <fullName evidence="1">Probable transcriptional regulatory protein Tgr7_2237</fullName>
    </recommendedName>
</protein>
<name>Y2237_THISH</name>
<sequence>MAGHSKWANIQHRKNAQDAKRGKLFTKLIKEITVAARMGGSDLNSNPRLRLAVDKALDANMTKDTVERAIKRGAGELEGVNYEEIRYEGYGPGGVAIMVDTMTDNRNRTVAEVRHAFTKCGGNLGTDGSVAYLFEKQGVLSYPAGSDEDRIMEVALEAGAEDVAVGDDGSIEVITNPDDYEAVRAAMTEAGLKPEHNEVTMRAGTAAPVDVESAPSLLKLLDMLDDLDDVQNVYTNADFPDEVMQALEA</sequence>
<dbReference type="EMBL" id="CP001339">
    <property type="protein sequence ID" value="ACL73317.1"/>
    <property type="molecule type" value="Genomic_DNA"/>
</dbReference>
<dbReference type="RefSeq" id="WP_012638793.1">
    <property type="nucleotide sequence ID" value="NC_011901.1"/>
</dbReference>
<dbReference type="SMR" id="B8GUJ7"/>
<dbReference type="STRING" id="396588.Tgr7_2237"/>
<dbReference type="KEGG" id="tgr:Tgr7_2237"/>
<dbReference type="eggNOG" id="COG0217">
    <property type="taxonomic scope" value="Bacteria"/>
</dbReference>
<dbReference type="HOGENOM" id="CLU_062974_2_2_6"/>
<dbReference type="OrthoDB" id="9781053at2"/>
<dbReference type="Proteomes" id="UP000002383">
    <property type="component" value="Chromosome"/>
</dbReference>
<dbReference type="GO" id="GO:0005829">
    <property type="term" value="C:cytosol"/>
    <property type="evidence" value="ECO:0007669"/>
    <property type="project" value="TreeGrafter"/>
</dbReference>
<dbReference type="GO" id="GO:0003677">
    <property type="term" value="F:DNA binding"/>
    <property type="evidence" value="ECO:0007669"/>
    <property type="project" value="UniProtKB-UniRule"/>
</dbReference>
<dbReference type="GO" id="GO:0006355">
    <property type="term" value="P:regulation of DNA-templated transcription"/>
    <property type="evidence" value="ECO:0007669"/>
    <property type="project" value="UniProtKB-UniRule"/>
</dbReference>
<dbReference type="FunFam" id="1.10.10.200:FF:000001">
    <property type="entry name" value="Probable transcriptional regulatory protein YebC"/>
    <property type="match status" value="1"/>
</dbReference>
<dbReference type="FunFam" id="3.30.70.980:FF:000002">
    <property type="entry name" value="Probable transcriptional regulatory protein YebC"/>
    <property type="match status" value="1"/>
</dbReference>
<dbReference type="Gene3D" id="1.10.10.200">
    <property type="match status" value="1"/>
</dbReference>
<dbReference type="Gene3D" id="3.30.70.980">
    <property type="match status" value="2"/>
</dbReference>
<dbReference type="HAMAP" id="MF_00693">
    <property type="entry name" value="Transcrip_reg_TACO1"/>
    <property type="match status" value="1"/>
</dbReference>
<dbReference type="InterPro" id="IPR017856">
    <property type="entry name" value="Integrase-like_N"/>
</dbReference>
<dbReference type="InterPro" id="IPR048300">
    <property type="entry name" value="TACO1_YebC-like_2nd/3rd_dom"/>
</dbReference>
<dbReference type="InterPro" id="IPR049083">
    <property type="entry name" value="TACO1_YebC_N"/>
</dbReference>
<dbReference type="InterPro" id="IPR002876">
    <property type="entry name" value="Transcrip_reg_TACO1-like"/>
</dbReference>
<dbReference type="InterPro" id="IPR026564">
    <property type="entry name" value="Transcrip_reg_TACO1-like_dom3"/>
</dbReference>
<dbReference type="InterPro" id="IPR029072">
    <property type="entry name" value="YebC-like"/>
</dbReference>
<dbReference type="NCBIfam" id="NF001030">
    <property type="entry name" value="PRK00110.1"/>
    <property type="match status" value="1"/>
</dbReference>
<dbReference type="NCBIfam" id="NF009044">
    <property type="entry name" value="PRK12378.1"/>
    <property type="match status" value="1"/>
</dbReference>
<dbReference type="NCBIfam" id="TIGR01033">
    <property type="entry name" value="YebC/PmpR family DNA-binding transcriptional regulator"/>
    <property type="match status" value="1"/>
</dbReference>
<dbReference type="PANTHER" id="PTHR12532:SF6">
    <property type="entry name" value="TRANSCRIPTIONAL REGULATORY PROTEIN YEBC-RELATED"/>
    <property type="match status" value="1"/>
</dbReference>
<dbReference type="PANTHER" id="PTHR12532">
    <property type="entry name" value="TRANSLATIONAL ACTIVATOR OF CYTOCHROME C OXIDASE 1"/>
    <property type="match status" value="1"/>
</dbReference>
<dbReference type="Pfam" id="PF20772">
    <property type="entry name" value="TACO1_YebC_N"/>
    <property type="match status" value="1"/>
</dbReference>
<dbReference type="Pfam" id="PF01709">
    <property type="entry name" value="Transcrip_reg"/>
    <property type="match status" value="1"/>
</dbReference>
<dbReference type="SUPFAM" id="SSF75625">
    <property type="entry name" value="YebC-like"/>
    <property type="match status" value="1"/>
</dbReference>